<sequence length="259" mass="28775">MELLAKTRKLNALLQSAAGKPVNFREMSDTMCEVIEANVFVVSRRGKLLGYAIHQQIENERMKHMLAERQFPEEYTQSLFNVTETSSNLGVDSDYTAFPVENRELFGQGLTTIVPIVGGGERLGTLVLARLGQEFLDDDLILAEYSSTVVGMEILREKAEEIEEEARSKAVVQMAISSLSYSELEAIEHIFEELNGTEGLLVASKIADRVGITRSVIVNALRKLESAGVIESRSLGMKGTYIKVLNDKFLQELAKLKTN</sequence>
<gene>
    <name evidence="1" type="primary">codY</name>
    <name type="ordered locus">BcerKBAB4_3651</name>
</gene>
<organism>
    <name type="scientific">Bacillus mycoides (strain KBAB4)</name>
    <name type="common">Bacillus weihenstephanensis</name>
    <dbReference type="NCBI Taxonomy" id="315730"/>
    <lineage>
        <taxon>Bacteria</taxon>
        <taxon>Bacillati</taxon>
        <taxon>Bacillota</taxon>
        <taxon>Bacilli</taxon>
        <taxon>Bacillales</taxon>
        <taxon>Bacillaceae</taxon>
        <taxon>Bacillus</taxon>
        <taxon>Bacillus cereus group</taxon>
    </lineage>
</organism>
<keyword id="KW-0963">Cytoplasm</keyword>
<keyword id="KW-0238">DNA-binding</keyword>
<keyword id="KW-0597">Phosphoprotein</keyword>
<keyword id="KW-0678">Repressor</keyword>
<keyword id="KW-0804">Transcription</keyword>
<keyword id="KW-0805">Transcription regulation</keyword>
<proteinExistence type="inferred from homology"/>
<protein>
    <recommendedName>
        <fullName evidence="1">Global transcriptional regulator CodY</fullName>
    </recommendedName>
</protein>
<accession>A9VT66</accession>
<reference key="1">
    <citation type="journal article" date="2008" name="Chem. Biol. Interact.">
        <title>Extending the Bacillus cereus group genomics to putative food-borne pathogens of different toxicity.</title>
        <authorList>
            <person name="Lapidus A."/>
            <person name="Goltsman E."/>
            <person name="Auger S."/>
            <person name="Galleron N."/>
            <person name="Segurens B."/>
            <person name="Dossat C."/>
            <person name="Land M.L."/>
            <person name="Broussolle V."/>
            <person name="Brillard J."/>
            <person name="Guinebretiere M.-H."/>
            <person name="Sanchis V."/>
            <person name="Nguen-the C."/>
            <person name="Lereclus D."/>
            <person name="Richardson P."/>
            <person name="Wincker P."/>
            <person name="Weissenbach J."/>
            <person name="Ehrlich S.D."/>
            <person name="Sorokin A."/>
        </authorList>
    </citation>
    <scope>NUCLEOTIDE SEQUENCE [LARGE SCALE GENOMIC DNA]</scope>
    <source>
        <strain>KBAB4</strain>
    </source>
</reference>
<feature type="chain" id="PRO_1000130450" description="Global transcriptional regulator CodY">
    <location>
        <begin position="1"/>
        <end position="259"/>
    </location>
</feature>
<feature type="DNA-binding region" description="H-T-H motif" evidence="1">
    <location>
        <begin position="203"/>
        <end position="222"/>
    </location>
</feature>
<feature type="region of interest" description="GAF domain" evidence="1">
    <location>
        <begin position="1"/>
        <end position="155"/>
    </location>
</feature>
<feature type="modified residue" description="Phosphoserine" evidence="1">
    <location>
        <position position="215"/>
    </location>
</feature>
<comment type="function">
    <text evidence="1">DNA-binding global transcriptional regulator which is involved in the adaptive response to starvation and acts by directly or indirectly controlling the expression of numerous genes in response to nutrient availability. During rapid exponential growth, CodY is highly active and represses genes whose products allow adaptation to nutrient depletion.</text>
</comment>
<comment type="subcellular location">
    <subcellularLocation>
        <location evidence="1">Cytoplasm</location>
    </subcellularLocation>
</comment>
<comment type="similarity">
    <text evidence="1">Belongs to the CodY family.</text>
</comment>
<dbReference type="EMBL" id="CP000903">
    <property type="protein sequence ID" value="ABY44822.1"/>
    <property type="molecule type" value="Genomic_DNA"/>
</dbReference>
<dbReference type="RefSeq" id="WP_002014541.1">
    <property type="nucleotide sequence ID" value="NC_010184.1"/>
</dbReference>
<dbReference type="SMR" id="A9VT66"/>
<dbReference type="GeneID" id="66266608"/>
<dbReference type="KEGG" id="bwe:BcerKBAB4_3651"/>
<dbReference type="eggNOG" id="COG4465">
    <property type="taxonomic scope" value="Bacteria"/>
</dbReference>
<dbReference type="HOGENOM" id="CLU_089581_0_0_9"/>
<dbReference type="Proteomes" id="UP000002154">
    <property type="component" value="Chromosome"/>
</dbReference>
<dbReference type="GO" id="GO:0005737">
    <property type="term" value="C:cytoplasm"/>
    <property type="evidence" value="ECO:0007669"/>
    <property type="project" value="UniProtKB-SubCell"/>
</dbReference>
<dbReference type="GO" id="GO:0003677">
    <property type="term" value="F:DNA binding"/>
    <property type="evidence" value="ECO:0007669"/>
    <property type="project" value="UniProtKB-UniRule"/>
</dbReference>
<dbReference type="GO" id="GO:0003700">
    <property type="term" value="F:DNA-binding transcription factor activity"/>
    <property type="evidence" value="ECO:0007669"/>
    <property type="project" value="InterPro"/>
</dbReference>
<dbReference type="GO" id="GO:0005525">
    <property type="term" value="F:GTP binding"/>
    <property type="evidence" value="ECO:0007669"/>
    <property type="project" value="InterPro"/>
</dbReference>
<dbReference type="GO" id="GO:0045892">
    <property type="term" value="P:negative regulation of DNA-templated transcription"/>
    <property type="evidence" value="ECO:0007669"/>
    <property type="project" value="UniProtKB-UniRule"/>
</dbReference>
<dbReference type="FunFam" id="1.10.10.10:FF:000034">
    <property type="entry name" value="GTP-sensing transcriptional pleiotropic repressor CodY"/>
    <property type="match status" value="1"/>
</dbReference>
<dbReference type="FunFam" id="3.30.450.40:FF:000003">
    <property type="entry name" value="GTP-sensing transcriptional pleiotropic repressor CodY"/>
    <property type="match status" value="1"/>
</dbReference>
<dbReference type="Gene3D" id="3.30.450.40">
    <property type="match status" value="1"/>
</dbReference>
<dbReference type="Gene3D" id="1.10.10.10">
    <property type="entry name" value="Winged helix-like DNA-binding domain superfamily/Winged helix DNA-binding domain"/>
    <property type="match status" value="1"/>
</dbReference>
<dbReference type="HAMAP" id="MF_00621">
    <property type="entry name" value="HTH_type_CodY"/>
    <property type="match status" value="1"/>
</dbReference>
<dbReference type="InterPro" id="IPR014154">
    <property type="entry name" value="CodY"/>
</dbReference>
<dbReference type="InterPro" id="IPR029016">
    <property type="entry name" value="GAF-like_dom_sf"/>
</dbReference>
<dbReference type="InterPro" id="IPR013198">
    <property type="entry name" value="GTP_trans_reg_CodY_C"/>
</dbReference>
<dbReference type="InterPro" id="IPR010312">
    <property type="entry name" value="Transc_reg_CodY_N"/>
</dbReference>
<dbReference type="InterPro" id="IPR036388">
    <property type="entry name" value="WH-like_DNA-bd_sf"/>
</dbReference>
<dbReference type="InterPro" id="IPR036390">
    <property type="entry name" value="WH_DNA-bd_sf"/>
</dbReference>
<dbReference type="NCBIfam" id="TIGR02787">
    <property type="entry name" value="codY_Gpos"/>
    <property type="match status" value="1"/>
</dbReference>
<dbReference type="NCBIfam" id="NF003170">
    <property type="entry name" value="PRK04158.1"/>
    <property type="match status" value="1"/>
</dbReference>
<dbReference type="PANTHER" id="PTHR40062:SF1">
    <property type="entry name" value="GLOBAL TRANSCRIPTIONAL REGULATOR CODY"/>
    <property type="match status" value="1"/>
</dbReference>
<dbReference type="PANTHER" id="PTHR40062">
    <property type="entry name" value="GTP-SENSING TRANSCRIPTIONAL PLEIOTROPIC REPRESSOR CODY"/>
    <property type="match status" value="1"/>
</dbReference>
<dbReference type="Pfam" id="PF06018">
    <property type="entry name" value="CodY"/>
    <property type="match status" value="1"/>
</dbReference>
<dbReference type="Pfam" id="PF08222">
    <property type="entry name" value="HTH_CodY"/>
    <property type="match status" value="1"/>
</dbReference>
<dbReference type="PIRSF" id="PIRSF011572">
    <property type="entry name" value="GTP_sensing_CodY"/>
    <property type="match status" value="1"/>
</dbReference>
<dbReference type="SUPFAM" id="SSF46785">
    <property type="entry name" value="Winged helix' DNA-binding domain"/>
    <property type="match status" value="1"/>
</dbReference>
<name>CODY_BACMK</name>
<evidence type="ECO:0000255" key="1">
    <source>
        <dbReference type="HAMAP-Rule" id="MF_00621"/>
    </source>
</evidence>